<keyword id="KW-0067">ATP-binding</keyword>
<keyword id="KW-0436">Ligase</keyword>
<keyword id="KW-0460">Magnesium</keyword>
<keyword id="KW-0479">Metal-binding</keyword>
<keyword id="KW-0547">Nucleotide-binding</keyword>
<keyword id="KW-1185">Reference proteome</keyword>
<keyword id="KW-0816">Tricarboxylic acid cycle</keyword>
<name>SUCC_SHIDS</name>
<accession>Q32IK3</accession>
<reference key="1">
    <citation type="journal article" date="2005" name="Nucleic Acids Res.">
        <title>Genome dynamics and diversity of Shigella species, the etiologic agents of bacillary dysentery.</title>
        <authorList>
            <person name="Yang F."/>
            <person name="Yang J."/>
            <person name="Zhang X."/>
            <person name="Chen L."/>
            <person name="Jiang Y."/>
            <person name="Yan Y."/>
            <person name="Tang X."/>
            <person name="Wang J."/>
            <person name="Xiong Z."/>
            <person name="Dong J."/>
            <person name="Xue Y."/>
            <person name="Zhu Y."/>
            <person name="Xu X."/>
            <person name="Sun L."/>
            <person name="Chen S."/>
            <person name="Nie H."/>
            <person name="Peng J."/>
            <person name="Xu J."/>
            <person name="Wang Y."/>
            <person name="Yuan Z."/>
            <person name="Wen Y."/>
            <person name="Yao Z."/>
            <person name="Shen Y."/>
            <person name="Qiang B."/>
            <person name="Hou Y."/>
            <person name="Yu J."/>
            <person name="Jin Q."/>
        </authorList>
    </citation>
    <scope>NUCLEOTIDE SEQUENCE [LARGE SCALE GENOMIC DNA]</scope>
    <source>
        <strain>Sd197</strain>
    </source>
</reference>
<evidence type="ECO:0000255" key="1">
    <source>
        <dbReference type="HAMAP-Rule" id="MF_00558"/>
    </source>
</evidence>
<protein>
    <recommendedName>
        <fullName evidence="1">Succinate--CoA ligase [ADP-forming] subunit beta</fullName>
        <ecNumber evidence="1">6.2.1.5</ecNumber>
    </recommendedName>
    <alternativeName>
        <fullName evidence="1">Succinyl-CoA synthetase subunit beta</fullName>
        <shortName evidence="1">SCS-beta</shortName>
    </alternativeName>
</protein>
<feature type="chain" id="PRO_1000082233" description="Succinate--CoA ligase [ADP-forming] subunit beta">
    <location>
        <begin position="1"/>
        <end position="388"/>
    </location>
</feature>
<feature type="domain" description="ATP-grasp" evidence="1">
    <location>
        <begin position="9"/>
        <end position="244"/>
    </location>
</feature>
<feature type="binding site" evidence="1">
    <location>
        <position position="46"/>
    </location>
    <ligand>
        <name>ATP</name>
        <dbReference type="ChEBI" id="CHEBI:30616"/>
    </ligand>
</feature>
<feature type="binding site" evidence="1">
    <location>
        <begin position="53"/>
        <end position="55"/>
    </location>
    <ligand>
        <name>ATP</name>
        <dbReference type="ChEBI" id="CHEBI:30616"/>
    </ligand>
</feature>
<feature type="binding site" evidence="1">
    <location>
        <position position="99"/>
    </location>
    <ligand>
        <name>ATP</name>
        <dbReference type="ChEBI" id="CHEBI:30616"/>
    </ligand>
</feature>
<feature type="binding site" evidence="1">
    <location>
        <position position="102"/>
    </location>
    <ligand>
        <name>ATP</name>
        <dbReference type="ChEBI" id="CHEBI:30616"/>
    </ligand>
</feature>
<feature type="binding site" evidence="1">
    <location>
        <position position="107"/>
    </location>
    <ligand>
        <name>ATP</name>
        <dbReference type="ChEBI" id="CHEBI:30616"/>
    </ligand>
</feature>
<feature type="binding site" evidence="1">
    <location>
        <position position="199"/>
    </location>
    <ligand>
        <name>Mg(2+)</name>
        <dbReference type="ChEBI" id="CHEBI:18420"/>
    </ligand>
</feature>
<feature type="binding site" evidence="1">
    <location>
        <position position="213"/>
    </location>
    <ligand>
        <name>Mg(2+)</name>
        <dbReference type="ChEBI" id="CHEBI:18420"/>
    </ligand>
</feature>
<feature type="binding site" evidence="1">
    <location>
        <position position="264"/>
    </location>
    <ligand>
        <name>substrate</name>
        <note>ligand shared with subunit alpha</note>
    </ligand>
</feature>
<feature type="binding site" evidence="1">
    <location>
        <begin position="321"/>
        <end position="323"/>
    </location>
    <ligand>
        <name>substrate</name>
        <note>ligand shared with subunit alpha</note>
    </ligand>
</feature>
<comment type="function">
    <text evidence="1">Succinyl-CoA synthetase functions in the citric acid cycle (TCA), coupling the hydrolysis of succinyl-CoA to the synthesis of either ATP or GTP and thus represents the only step of substrate-level phosphorylation in the TCA. The beta subunit provides nucleotide specificity of the enzyme and binds the substrate succinate, while the binding sites for coenzyme A and phosphate are found in the alpha subunit.</text>
</comment>
<comment type="catalytic activity">
    <reaction evidence="1">
        <text>succinate + ATP + CoA = succinyl-CoA + ADP + phosphate</text>
        <dbReference type="Rhea" id="RHEA:17661"/>
        <dbReference type="ChEBI" id="CHEBI:30031"/>
        <dbReference type="ChEBI" id="CHEBI:30616"/>
        <dbReference type="ChEBI" id="CHEBI:43474"/>
        <dbReference type="ChEBI" id="CHEBI:57287"/>
        <dbReference type="ChEBI" id="CHEBI:57292"/>
        <dbReference type="ChEBI" id="CHEBI:456216"/>
        <dbReference type="EC" id="6.2.1.5"/>
    </reaction>
    <physiologicalReaction direction="right-to-left" evidence="1">
        <dbReference type="Rhea" id="RHEA:17663"/>
    </physiologicalReaction>
</comment>
<comment type="catalytic activity">
    <reaction evidence="1">
        <text>GTP + succinate + CoA = succinyl-CoA + GDP + phosphate</text>
        <dbReference type="Rhea" id="RHEA:22120"/>
        <dbReference type="ChEBI" id="CHEBI:30031"/>
        <dbReference type="ChEBI" id="CHEBI:37565"/>
        <dbReference type="ChEBI" id="CHEBI:43474"/>
        <dbReference type="ChEBI" id="CHEBI:57287"/>
        <dbReference type="ChEBI" id="CHEBI:57292"/>
        <dbReference type="ChEBI" id="CHEBI:58189"/>
    </reaction>
    <physiologicalReaction direction="right-to-left" evidence="1">
        <dbReference type="Rhea" id="RHEA:22122"/>
    </physiologicalReaction>
</comment>
<comment type="cofactor">
    <cofactor evidence="1">
        <name>Mg(2+)</name>
        <dbReference type="ChEBI" id="CHEBI:18420"/>
    </cofactor>
    <text evidence="1">Binds 1 Mg(2+) ion per subunit.</text>
</comment>
<comment type="pathway">
    <text evidence="1">Carbohydrate metabolism; tricarboxylic acid cycle; succinate from succinyl-CoA (ligase route): step 1/1.</text>
</comment>
<comment type="subunit">
    <text evidence="1">Heterotetramer of two alpha and two beta subunits.</text>
</comment>
<comment type="similarity">
    <text evidence="1">Belongs to the succinate/malate CoA ligase beta subunit family.</text>
</comment>
<dbReference type="EC" id="6.2.1.5" evidence="1"/>
<dbReference type="EMBL" id="CP000034">
    <property type="protein sequence ID" value="ABB60854.1"/>
    <property type="molecule type" value="Genomic_DNA"/>
</dbReference>
<dbReference type="RefSeq" id="WP_001048585.1">
    <property type="nucleotide sequence ID" value="NC_007606.1"/>
</dbReference>
<dbReference type="RefSeq" id="YP_402343.1">
    <property type="nucleotide sequence ID" value="NC_007606.1"/>
</dbReference>
<dbReference type="SMR" id="Q32IK3"/>
<dbReference type="STRING" id="300267.SDY_0666"/>
<dbReference type="EnsemblBacteria" id="ABB60854">
    <property type="protein sequence ID" value="ABB60854"/>
    <property type="gene ID" value="SDY_0666"/>
</dbReference>
<dbReference type="KEGG" id="sdy:SDY_0666"/>
<dbReference type="PATRIC" id="fig|300267.13.peg.777"/>
<dbReference type="HOGENOM" id="CLU_037430_0_2_6"/>
<dbReference type="UniPathway" id="UPA00223">
    <property type="reaction ID" value="UER00999"/>
</dbReference>
<dbReference type="Proteomes" id="UP000002716">
    <property type="component" value="Chromosome"/>
</dbReference>
<dbReference type="GO" id="GO:0005829">
    <property type="term" value="C:cytosol"/>
    <property type="evidence" value="ECO:0007669"/>
    <property type="project" value="TreeGrafter"/>
</dbReference>
<dbReference type="GO" id="GO:0042709">
    <property type="term" value="C:succinate-CoA ligase complex"/>
    <property type="evidence" value="ECO:0007669"/>
    <property type="project" value="TreeGrafter"/>
</dbReference>
<dbReference type="GO" id="GO:0005524">
    <property type="term" value="F:ATP binding"/>
    <property type="evidence" value="ECO:0007669"/>
    <property type="project" value="UniProtKB-UniRule"/>
</dbReference>
<dbReference type="GO" id="GO:0000287">
    <property type="term" value="F:magnesium ion binding"/>
    <property type="evidence" value="ECO:0007669"/>
    <property type="project" value="UniProtKB-UniRule"/>
</dbReference>
<dbReference type="GO" id="GO:0004775">
    <property type="term" value="F:succinate-CoA ligase (ADP-forming) activity"/>
    <property type="evidence" value="ECO:0007669"/>
    <property type="project" value="UniProtKB-UniRule"/>
</dbReference>
<dbReference type="GO" id="GO:0004776">
    <property type="term" value="F:succinate-CoA ligase (GDP-forming) activity"/>
    <property type="evidence" value="ECO:0007669"/>
    <property type="project" value="RHEA"/>
</dbReference>
<dbReference type="GO" id="GO:0006104">
    <property type="term" value="P:succinyl-CoA metabolic process"/>
    <property type="evidence" value="ECO:0007669"/>
    <property type="project" value="TreeGrafter"/>
</dbReference>
<dbReference type="GO" id="GO:0006099">
    <property type="term" value="P:tricarboxylic acid cycle"/>
    <property type="evidence" value="ECO:0007669"/>
    <property type="project" value="UniProtKB-UniRule"/>
</dbReference>
<dbReference type="FunFam" id="3.30.1490.20:FF:000002">
    <property type="entry name" value="Succinate--CoA ligase [ADP-forming] subunit beta"/>
    <property type="match status" value="1"/>
</dbReference>
<dbReference type="FunFam" id="3.30.470.20:FF:000002">
    <property type="entry name" value="Succinate--CoA ligase [ADP-forming] subunit beta"/>
    <property type="match status" value="1"/>
</dbReference>
<dbReference type="FunFam" id="3.40.50.261:FF:000001">
    <property type="entry name" value="Succinate--CoA ligase [ADP-forming] subunit beta"/>
    <property type="match status" value="1"/>
</dbReference>
<dbReference type="Gene3D" id="3.30.1490.20">
    <property type="entry name" value="ATP-grasp fold, A domain"/>
    <property type="match status" value="1"/>
</dbReference>
<dbReference type="Gene3D" id="3.30.470.20">
    <property type="entry name" value="ATP-grasp fold, B domain"/>
    <property type="match status" value="1"/>
</dbReference>
<dbReference type="Gene3D" id="3.40.50.261">
    <property type="entry name" value="Succinyl-CoA synthetase domains"/>
    <property type="match status" value="1"/>
</dbReference>
<dbReference type="HAMAP" id="MF_00558">
    <property type="entry name" value="Succ_CoA_beta"/>
    <property type="match status" value="1"/>
</dbReference>
<dbReference type="InterPro" id="IPR011761">
    <property type="entry name" value="ATP-grasp"/>
</dbReference>
<dbReference type="InterPro" id="IPR013650">
    <property type="entry name" value="ATP-grasp_succ-CoA_synth-type"/>
</dbReference>
<dbReference type="InterPro" id="IPR013815">
    <property type="entry name" value="ATP_grasp_subdomain_1"/>
</dbReference>
<dbReference type="InterPro" id="IPR017866">
    <property type="entry name" value="Succ-CoA_synthase_bsu_CS"/>
</dbReference>
<dbReference type="InterPro" id="IPR005811">
    <property type="entry name" value="SUCC_ACL_C"/>
</dbReference>
<dbReference type="InterPro" id="IPR005809">
    <property type="entry name" value="Succ_CoA_ligase-like_bsu"/>
</dbReference>
<dbReference type="InterPro" id="IPR016102">
    <property type="entry name" value="Succinyl-CoA_synth-like"/>
</dbReference>
<dbReference type="NCBIfam" id="NF001913">
    <property type="entry name" value="PRK00696.1"/>
    <property type="match status" value="1"/>
</dbReference>
<dbReference type="NCBIfam" id="TIGR01016">
    <property type="entry name" value="sucCoAbeta"/>
    <property type="match status" value="1"/>
</dbReference>
<dbReference type="PANTHER" id="PTHR11815:SF10">
    <property type="entry name" value="SUCCINATE--COA LIGASE [GDP-FORMING] SUBUNIT BETA, MITOCHONDRIAL"/>
    <property type="match status" value="1"/>
</dbReference>
<dbReference type="PANTHER" id="PTHR11815">
    <property type="entry name" value="SUCCINYL-COA SYNTHETASE BETA CHAIN"/>
    <property type="match status" value="1"/>
</dbReference>
<dbReference type="Pfam" id="PF08442">
    <property type="entry name" value="ATP-grasp_2"/>
    <property type="match status" value="1"/>
</dbReference>
<dbReference type="Pfam" id="PF00549">
    <property type="entry name" value="Ligase_CoA"/>
    <property type="match status" value="1"/>
</dbReference>
<dbReference type="PIRSF" id="PIRSF001554">
    <property type="entry name" value="SucCS_beta"/>
    <property type="match status" value="1"/>
</dbReference>
<dbReference type="SUPFAM" id="SSF56059">
    <property type="entry name" value="Glutathione synthetase ATP-binding domain-like"/>
    <property type="match status" value="1"/>
</dbReference>
<dbReference type="SUPFAM" id="SSF52210">
    <property type="entry name" value="Succinyl-CoA synthetase domains"/>
    <property type="match status" value="1"/>
</dbReference>
<dbReference type="PROSITE" id="PS50975">
    <property type="entry name" value="ATP_GRASP"/>
    <property type="match status" value="1"/>
</dbReference>
<dbReference type="PROSITE" id="PS01217">
    <property type="entry name" value="SUCCINYL_COA_LIG_3"/>
    <property type="match status" value="1"/>
</dbReference>
<sequence length="388" mass="41351">MNLHEYQAKQLFARYGLPAPVGYACTTPREAEEAASKIGAGPWGVKCQVHAGGRGKAGGVKVVNSKEDIRAFAENWLGKRLVTYQTDANGQPVNQILVEAATDIAKELYLGAVVDRSSRRVVFMASTEGGVEIEKVAEETPHLIHKVALDPLTGPMPYQGRELAFKLGLEGKLVQQFTKIFMGLATIFLERDLALIEINPLVITKQGDLICLDGKLGADGNALFRQPDLREMRDQSQEDPREAQAAQWELNYVALDGNIGCMVNGAGLAMGTMDIVKLHGGEPANFLDVGGGATKERVTEAFKIILSDDKVKAVLVNIFGGIVRCDLIADGIIGAVAEVGVNVPVVVRLEGNNAELGAKKLADSGLNIIAAKGLTDAAQQVVAAVEGK</sequence>
<organism>
    <name type="scientific">Shigella dysenteriae serotype 1 (strain Sd197)</name>
    <dbReference type="NCBI Taxonomy" id="300267"/>
    <lineage>
        <taxon>Bacteria</taxon>
        <taxon>Pseudomonadati</taxon>
        <taxon>Pseudomonadota</taxon>
        <taxon>Gammaproteobacteria</taxon>
        <taxon>Enterobacterales</taxon>
        <taxon>Enterobacteriaceae</taxon>
        <taxon>Shigella</taxon>
    </lineage>
</organism>
<proteinExistence type="inferred from homology"/>
<gene>
    <name evidence="1" type="primary">sucC</name>
    <name type="ordered locus">SDY_0666</name>
</gene>